<proteinExistence type="inferred from homology"/>
<feature type="chain" id="PRO_0000262012" description="UPF0246 protein DSY0297">
    <location>
        <begin position="1"/>
        <end position="251"/>
    </location>
</feature>
<comment type="similarity">
    <text evidence="1">Belongs to the UPF0246 family.</text>
</comment>
<keyword id="KW-1185">Reference proteome</keyword>
<organism>
    <name type="scientific">Desulfitobacterium hafniense (strain Y51)</name>
    <dbReference type="NCBI Taxonomy" id="138119"/>
    <lineage>
        <taxon>Bacteria</taxon>
        <taxon>Bacillati</taxon>
        <taxon>Bacillota</taxon>
        <taxon>Clostridia</taxon>
        <taxon>Eubacteriales</taxon>
        <taxon>Desulfitobacteriaceae</taxon>
        <taxon>Desulfitobacterium</taxon>
    </lineage>
</organism>
<evidence type="ECO:0000255" key="1">
    <source>
        <dbReference type="HAMAP-Rule" id="MF_00652"/>
    </source>
</evidence>
<accession>Q251F6</accession>
<sequence length="251" mass="29577">MKIIISPAKKMNMDGDFLSPRNIPVYLEKAKKLQRHLQSLPYEELRKLLCCNDEIAGLNYERYQTMDLSGYTSPAILAYDGIQYKYMAPQVFEDDYFDYIEKHLRILSGFYGILKPFDGVVPYRLEMQAKLKTDFCRNLYDYWQDDIYRELTQEDTTILNLASAEYSKTIEKYLTAGINYVKCVFGELRDGRVIEKGVYVKMARGEMVRFMAEKAIKDLEQIKEFNRLGFRYREQLSDNNTFVFVKAMAEK</sequence>
<gene>
    <name type="ordered locus">DSY0297</name>
</gene>
<name>Y297_DESHY</name>
<reference key="1">
    <citation type="journal article" date="2006" name="J. Bacteriol.">
        <title>Complete genome sequence of the dehalorespiring bacterium Desulfitobacterium hafniense Y51 and comparison with Dehalococcoides ethenogenes 195.</title>
        <authorList>
            <person name="Nonaka H."/>
            <person name="Keresztes G."/>
            <person name="Shinoda Y."/>
            <person name="Ikenaga Y."/>
            <person name="Abe M."/>
            <person name="Naito K."/>
            <person name="Inatomi K."/>
            <person name="Furukawa K."/>
            <person name="Inui M."/>
            <person name="Yukawa H."/>
        </authorList>
    </citation>
    <scope>NUCLEOTIDE SEQUENCE [LARGE SCALE GENOMIC DNA]</scope>
    <source>
        <strain>Y51</strain>
    </source>
</reference>
<dbReference type="EMBL" id="AP008230">
    <property type="protein sequence ID" value="BAE82086.1"/>
    <property type="molecule type" value="Genomic_DNA"/>
</dbReference>
<dbReference type="SMR" id="Q251F6"/>
<dbReference type="STRING" id="138119.DSY0297"/>
<dbReference type="KEGG" id="dsy:DSY0297"/>
<dbReference type="eggNOG" id="COG3022">
    <property type="taxonomic scope" value="Bacteria"/>
</dbReference>
<dbReference type="HOGENOM" id="CLU_061989_1_0_9"/>
<dbReference type="Proteomes" id="UP000001946">
    <property type="component" value="Chromosome"/>
</dbReference>
<dbReference type="GO" id="GO:0005829">
    <property type="term" value="C:cytosol"/>
    <property type="evidence" value="ECO:0007669"/>
    <property type="project" value="TreeGrafter"/>
</dbReference>
<dbReference type="GO" id="GO:0033194">
    <property type="term" value="P:response to hydroperoxide"/>
    <property type="evidence" value="ECO:0007669"/>
    <property type="project" value="TreeGrafter"/>
</dbReference>
<dbReference type="HAMAP" id="MF_00652">
    <property type="entry name" value="UPF0246"/>
    <property type="match status" value="1"/>
</dbReference>
<dbReference type="InterPro" id="IPR005583">
    <property type="entry name" value="YaaA"/>
</dbReference>
<dbReference type="NCBIfam" id="NF002543">
    <property type="entry name" value="PRK02101.1-4"/>
    <property type="match status" value="1"/>
</dbReference>
<dbReference type="PANTHER" id="PTHR30283:SF4">
    <property type="entry name" value="PEROXIDE STRESS RESISTANCE PROTEIN YAAA"/>
    <property type="match status" value="1"/>
</dbReference>
<dbReference type="PANTHER" id="PTHR30283">
    <property type="entry name" value="PEROXIDE STRESS RESPONSE PROTEIN YAAA"/>
    <property type="match status" value="1"/>
</dbReference>
<dbReference type="Pfam" id="PF03883">
    <property type="entry name" value="H2O2_YaaD"/>
    <property type="match status" value="1"/>
</dbReference>
<protein>
    <recommendedName>
        <fullName evidence="1">UPF0246 protein DSY0297</fullName>
    </recommendedName>
</protein>